<gene>
    <name evidence="1" type="primary">hisC</name>
    <name type="ordered locus">Cgl2101</name>
    <name type="ordered locus">cg2304</name>
</gene>
<name>HIS8_CORGL</name>
<keyword id="KW-0002">3D-structure</keyword>
<keyword id="KW-0028">Amino-acid biosynthesis</keyword>
<keyword id="KW-0032">Aminotransferase</keyword>
<keyword id="KW-0368">Histidine biosynthesis</keyword>
<keyword id="KW-0663">Pyridoxal phosphate</keyword>
<keyword id="KW-1185">Reference proteome</keyword>
<keyword id="KW-0808">Transferase</keyword>
<accession>Q9KJU4</accession>
<comment type="catalytic activity">
    <reaction evidence="1">
        <text>L-histidinol phosphate + 2-oxoglutarate = 3-(imidazol-4-yl)-2-oxopropyl phosphate + L-glutamate</text>
        <dbReference type="Rhea" id="RHEA:23744"/>
        <dbReference type="ChEBI" id="CHEBI:16810"/>
        <dbReference type="ChEBI" id="CHEBI:29985"/>
        <dbReference type="ChEBI" id="CHEBI:57766"/>
        <dbReference type="ChEBI" id="CHEBI:57980"/>
        <dbReference type="EC" id="2.6.1.9"/>
    </reaction>
</comment>
<comment type="cofactor">
    <cofactor evidence="1">
        <name>pyridoxal 5'-phosphate</name>
        <dbReference type="ChEBI" id="CHEBI:597326"/>
    </cofactor>
</comment>
<comment type="pathway">
    <text evidence="1">Amino-acid biosynthesis; L-histidine biosynthesis; L-histidine from 5-phospho-alpha-D-ribose 1-diphosphate: step 7/9.</text>
</comment>
<comment type="subunit">
    <text evidence="1">Homodimer.</text>
</comment>
<comment type="similarity">
    <text evidence="1">Belongs to the class-II pyridoxal-phosphate-dependent aminotransferase family. Histidinol-phosphate aminotransferase subfamily.</text>
</comment>
<sequence length="366" mass="39918">MTKITLSDLPLREELRGEHAYGAPQLNVDIRLNTNENPYPPSEALVADLVATVDKIATELNRYPERDAVELRDELAAYITKQTGVAVTRDNLWAANGSNEILQQLLQAFGGPGRTALGFQPSYSMHPILAKGTHTEFIAVSRGADFRIDMDVALEEIRAKQPDIVFVTTPNNPTGDVTSLDDVERIINVAPGIVIVDEAYAEFSPSPSATTLLEKYPTKLVVSRTMSKAFDFAGGRLGYFVANPAFIDAVMLVRLPYHLSALSQAAAIVALRHSADTLGTVEKLSVERVRVAARLEELGYAVVPSESNFVFFGDFSDQHAAWQAFLDRGVLIRDVGIAGHLRTTIGVPEENDAFLDAAAEIIKLNL</sequence>
<organism>
    <name type="scientific">Corynebacterium glutamicum (strain ATCC 13032 / DSM 20300 / JCM 1318 / BCRC 11384 / CCUG 27702 / LMG 3730 / NBRC 12168 / NCIMB 10025 / NRRL B-2784 / 534)</name>
    <dbReference type="NCBI Taxonomy" id="196627"/>
    <lineage>
        <taxon>Bacteria</taxon>
        <taxon>Bacillati</taxon>
        <taxon>Actinomycetota</taxon>
        <taxon>Actinomycetes</taxon>
        <taxon>Mycobacteriales</taxon>
        <taxon>Corynebacteriaceae</taxon>
        <taxon>Corynebacterium</taxon>
    </lineage>
</organism>
<evidence type="ECO:0000255" key="1">
    <source>
        <dbReference type="HAMAP-Rule" id="MF_01023"/>
    </source>
</evidence>
<evidence type="ECO:0000305" key="2"/>
<evidence type="ECO:0007829" key="3">
    <source>
        <dbReference type="PDB" id="3CQ5"/>
    </source>
</evidence>
<protein>
    <recommendedName>
        <fullName evidence="1">Histidinol-phosphate aminotransferase</fullName>
        <ecNumber evidence="1">2.6.1.9</ecNumber>
    </recommendedName>
    <alternativeName>
        <fullName evidence="1">Imidazole acetol-phosphate transaminase</fullName>
    </alternativeName>
</protein>
<reference key="1">
    <citation type="submission" date="1999-06" db="EMBL/GenBank/DDBJ databases">
        <title>Molecular cloning of hisC gene from Corynebacterium glutamicum.</title>
        <authorList>
            <person name="Han M.S."/>
            <person name="Jung S.I."/>
            <person name="Chun J.Y."/>
            <person name="Lee M.-S."/>
        </authorList>
    </citation>
    <scope>NUCLEOTIDE SEQUENCE [GENOMIC DNA]</scope>
    <source>
        <strain>ATCC 13059 / LMG 3658 / NCIB 10332 / AS019 / 613</strain>
    </source>
</reference>
<reference key="2">
    <citation type="journal article" date="2003" name="J. Biotechnol.">
        <title>Genome-based analysis of biosynthetic aminotransferase genes of Corynebacterium glutamicum.</title>
        <authorList>
            <person name="McHardy A.C."/>
            <person name="Tauch A."/>
            <person name="Rueckert C."/>
            <person name="Puehler A."/>
            <person name="Kalinowski J."/>
        </authorList>
    </citation>
    <scope>NUCLEOTIDE SEQUENCE [GENOMIC DNA]</scope>
    <source>
        <strain>ATCC 13032 / DSM 20300 / JCM 1318 / BCRC 11384 / CCUG 27702 / LMG 3730 / NBRC 12168 / NCIMB 10025 / NRRL B-2784 / 534</strain>
    </source>
</reference>
<reference key="3">
    <citation type="journal article" date="2003" name="Appl. Microbiol. Biotechnol.">
        <title>The Corynebacterium glutamicum genome: features and impacts on biotechnological processes.</title>
        <authorList>
            <person name="Ikeda M."/>
            <person name="Nakagawa S."/>
        </authorList>
    </citation>
    <scope>NUCLEOTIDE SEQUENCE [LARGE SCALE GENOMIC DNA]</scope>
    <source>
        <strain>ATCC 13032 / DSM 20300 / JCM 1318 / BCRC 11384 / CCUG 27702 / LMG 3730 / NBRC 12168 / NCIMB 10025 / NRRL B-2784 / 534</strain>
    </source>
</reference>
<reference key="4">
    <citation type="journal article" date="2003" name="J. Biotechnol.">
        <title>The complete Corynebacterium glutamicum ATCC 13032 genome sequence and its impact on the production of L-aspartate-derived amino acids and vitamins.</title>
        <authorList>
            <person name="Kalinowski J."/>
            <person name="Bathe B."/>
            <person name="Bartels D."/>
            <person name="Bischoff N."/>
            <person name="Bott M."/>
            <person name="Burkovski A."/>
            <person name="Dusch N."/>
            <person name="Eggeling L."/>
            <person name="Eikmanns B.J."/>
            <person name="Gaigalat L."/>
            <person name="Goesmann A."/>
            <person name="Hartmann M."/>
            <person name="Huthmacher K."/>
            <person name="Kraemer R."/>
            <person name="Linke B."/>
            <person name="McHardy A.C."/>
            <person name="Meyer F."/>
            <person name="Moeckel B."/>
            <person name="Pfefferle W."/>
            <person name="Puehler A."/>
            <person name="Rey D.A."/>
            <person name="Rueckert C."/>
            <person name="Rupp O."/>
            <person name="Sahm H."/>
            <person name="Wendisch V.F."/>
            <person name="Wiegraebe I."/>
            <person name="Tauch A."/>
        </authorList>
    </citation>
    <scope>NUCLEOTIDE SEQUENCE [LARGE SCALE GENOMIC DNA]</scope>
    <source>
        <strain>ATCC 13032 / DSM 20300 / JCM 1318 / BCRC 11384 / CCUG 27702 / LMG 3730 / NBRC 12168 / NCIMB 10025 / NRRL B-2784 / 534</strain>
    </source>
</reference>
<proteinExistence type="evidence at protein level"/>
<feature type="chain" id="PRO_0000153350" description="Histidinol-phosphate aminotransferase">
    <location>
        <begin position="1"/>
        <end position="366"/>
    </location>
</feature>
<feature type="modified residue" description="N6-(pyridoxal phosphate)lysine" evidence="1">
    <location>
        <position position="228"/>
    </location>
</feature>
<feature type="sequence conflict" description="In Ref. 1; AAF80390." evidence="2" ref="1">
    <original>AVELRDELAA</original>
    <variation>VWNGDDAWLL</variation>
    <location>
        <begin position="68"/>
        <end position="77"/>
    </location>
</feature>
<feature type="sequence conflict" description="In Ref. 1; AAF80390." evidence="2" ref="1">
    <original>G</original>
    <variation>E</variation>
    <location>
        <position position="235"/>
    </location>
</feature>
<feature type="sequence conflict" description="In Ref. 1; AAF80390." evidence="2" ref="1">
    <original>R</original>
    <variation>P</variation>
    <location>
        <position position="254"/>
    </location>
</feature>
<feature type="sequence conflict" description="In Ref. 1; AAF80390." evidence="2" ref="1">
    <original>ER</original>
    <variation>DC</variation>
    <location>
        <begin position="287"/>
        <end position="288"/>
    </location>
</feature>
<feature type="helix" evidence="3">
    <location>
        <begin position="6"/>
        <end position="8"/>
    </location>
</feature>
<feature type="helix" evidence="3">
    <location>
        <begin position="13"/>
        <end position="15"/>
    </location>
</feature>
<feature type="strand" evidence="3">
    <location>
        <begin position="29"/>
        <end position="31"/>
    </location>
</feature>
<feature type="helix" evidence="3">
    <location>
        <begin position="43"/>
        <end position="56"/>
    </location>
</feature>
<feature type="helix" evidence="3">
    <location>
        <begin position="57"/>
        <end position="59"/>
    </location>
</feature>
<feature type="helix" evidence="3">
    <location>
        <begin position="69"/>
        <end position="83"/>
    </location>
</feature>
<feature type="helix" evidence="3">
    <location>
        <begin position="89"/>
        <end position="91"/>
    </location>
</feature>
<feature type="strand" evidence="3">
    <location>
        <begin position="92"/>
        <end position="96"/>
    </location>
</feature>
<feature type="helix" evidence="3">
    <location>
        <begin position="97"/>
        <end position="109"/>
    </location>
</feature>
<feature type="strand" evidence="3">
    <location>
        <begin position="115"/>
        <end position="122"/>
    </location>
</feature>
<feature type="helix" evidence="3">
    <location>
        <begin position="125"/>
        <end position="132"/>
    </location>
</feature>
<feature type="strand" evidence="3">
    <location>
        <begin position="136"/>
        <end position="141"/>
    </location>
</feature>
<feature type="helix" evidence="3">
    <location>
        <begin position="150"/>
        <end position="160"/>
    </location>
</feature>
<feature type="strand" evidence="3">
    <location>
        <begin position="163"/>
        <end position="170"/>
    </location>
</feature>
<feature type="turn" evidence="3">
    <location>
        <begin position="172"/>
        <end position="174"/>
    </location>
</feature>
<feature type="helix" evidence="3">
    <location>
        <begin position="180"/>
        <end position="189"/>
    </location>
</feature>
<feature type="strand" evidence="3">
    <location>
        <begin position="191"/>
        <end position="197"/>
    </location>
</feature>
<feature type="helix" evidence="3">
    <location>
        <begin position="201"/>
        <end position="203"/>
    </location>
</feature>
<feature type="helix" evidence="3">
    <location>
        <begin position="209"/>
        <end position="212"/>
    </location>
</feature>
<feature type="turn" evidence="3">
    <location>
        <begin position="213"/>
        <end position="215"/>
    </location>
</feature>
<feature type="turn" evidence="3">
    <location>
        <begin position="217"/>
        <end position="219"/>
    </location>
</feature>
<feature type="strand" evidence="3">
    <location>
        <begin position="220"/>
        <end position="228"/>
    </location>
</feature>
<feature type="helix" evidence="3">
    <location>
        <begin position="233"/>
        <end position="235"/>
    </location>
</feature>
<feature type="strand" evidence="3">
    <location>
        <begin position="238"/>
        <end position="241"/>
    </location>
</feature>
<feature type="helix" evidence="3">
    <location>
        <begin position="245"/>
        <end position="251"/>
    </location>
</feature>
<feature type="helix" evidence="3">
    <location>
        <begin position="261"/>
        <end position="272"/>
    </location>
</feature>
<feature type="helix" evidence="3">
    <location>
        <begin position="274"/>
        <end position="278"/>
    </location>
</feature>
<feature type="helix" evidence="3">
    <location>
        <begin position="280"/>
        <end position="298"/>
    </location>
</feature>
<feature type="strand" evidence="3">
    <location>
        <begin position="301"/>
        <end position="303"/>
    </location>
</feature>
<feature type="strand" evidence="3">
    <location>
        <begin position="306"/>
        <end position="313"/>
    </location>
</feature>
<feature type="helix" evidence="3">
    <location>
        <begin position="318"/>
        <end position="327"/>
    </location>
</feature>
<feature type="strand" evidence="3">
    <location>
        <begin position="340"/>
        <end position="344"/>
    </location>
</feature>
<feature type="helix" evidence="3">
    <location>
        <begin position="348"/>
        <end position="362"/>
    </location>
</feature>
<dbReference type="EC" id="2.6.1.9" evidence="1"/>
<dbReference type="EMBL" id="AF160478">
    <property type="protein sequence ID" value="AAF80390.1"/>
    <property type="molecule type" value="Genomic_DNA"/>
</dbReference>
<dbReference type="EMBL" id="AY238320">
    <property type="protein sequence ID" value="AAO92311.1"/>
    <property type="molecule type" value="Genomic_DNA"/>
</dbReference>
<dbReference type="EMBL" id="BA000036">
    <property type="protein sequence ID" value="BAB99494.1"/>
    <property type="molecule type" value="Genomic_DNA"/>
</dbReference>
<dbReference type="EMBL" id="BX927154">
    <property type="protein sequence ID" value="CAF20437.1"/>
    <property type="molecule type" value="Genomic_DNA"/>
</dbReference>
<dbReference type="RefSeq" id="NP_601300.1">
    <property type="nucleotide sequence ID" value="NC_003450.3"/>
</dbReference>
<dbReference type="RefSeq" id="WP_011014880.1">
    <property type="nucleotide sequence ID" value="NC_006958.1"/>
</dbReference>
<dbReference type="PDB" id="3CQ4">
    <property type="method" value="X-ray"/>
    <property type="resolution" value="2.20 A"/>
    <property type="chains" value="A/B=1-366"/>
</dbReference>
<dbReference type="PDB" id="3CQ5">
    <property type="method" value="X-ray"/>
    <property type="resolution" value="1.80 A"/>
    <property type="chains" value="A/B/C=1-366"/>
</dbReference>
<dbReference type="PDB" id="3CQ6">
    <property type="method" value="X-ray"/>
    <property type="resolution" value="2.10 A"/>
    <property type="chains" value="A/C/E=1-366"/>
</dbReference>
<dbReference type="PDBsum" id="3CQ4"/>
<dbReference type="PDBsum" id="3CQ5"/>
<dbReference type="PDBsum" id="3CQ6"/>
<dbReference type="SMR" id="Q9KJU4"/>
<dbReference type="STRING" id="196627.cg2304"/>
<dbReference type="KEGG" id="cgb:cg2304"/>
<dbReference type="KEGG" id="cgl:Cgl2101"/>
<dbReference type="PATRIC" id="fig|196627.13.peg.2038"/>
<dbReference type="eggNOG" id="COG0079">
    <property type="taxonomic scope" value="Bacteria"/>
</dbReference>
<dbReference type="HOGENOM" id="CLU_017584_3_1_11"/>
<dbReference type="OrthoDB" id="9809616at2"/>
<dbReference type="BioCyc" id="CORYNE:G18NG-11693-MONOMER"/>
<dbReference type="BRENDA" id="2.6.1.9">
    <property type="organism ID" value="960"/>
</dbReference>
<dbReference type="UniPathway" id="UPA00031">
    <property type="reaction ID" value="UER00012"/>
</dbReference>
<dbReference type="EvolutionaryTrace" id="Q9KJU4"/>
<dbReference type="Proteomes" id="UP000000582">
    <property type="component" value="Chromosome"/>
</dbReference>
<dbReference type="Proteomes" id="UP000001009">
    <property type="component" value="Chromosome"/>
</dbReference>
<dbReference type="GO" id="GO:0004400">
    <property type="term" value="F:histidinol-phosphate transaminase activity"/>
    <property type="evidence" value="ECO:0007669"/>
    <property type="project" value="UniProtKB-UniRule"/>
</dbReference>
<dbReference type="GO" id="GO:0030170">
    <property type="term" value="F:pyridoxal phosphate binding"/>
    <property type="evidence" value="ECO:0007669"/>
    <property type="project" value="InterPro"/>
</dbReference>
<dbReference type="GO" id="GO:0000105">
    <property type="term" value="P:L-histidine biosynthetic process"/>
    <property type="evidence" value="ECO:0007669"/>
    <property type="project" value="UniProtKB-UniRule"/>
</dbReference>
<dbReference type="CDD" id="cd00609">
    <property type="entry name" value="AAT_like"/>
    <property type="match status" value="1"/>
</dbReference>
<dbReference type="Gene3D" id="3.90.1150.10">
    <property type="entry name" value="Aspartate Aminotransferase, domain 1"/>
    <property type="match status" value="1"/>
</dbReference>
<dbReference type="Gene3D" id="3.40.640.10">
    <property type="entry name" value="Type I PLP-dependent aspartate aminotransferase-like (Major domain)"/>
    <property type="match status" value="1"/>
</dbReference>
<dbReference type="HAMAP" id="MF_01023">
    <property type="entry name" value="HisC_aminotrans_2"/>
    <property type="match status" value="1"/>
</dbReference>
<dbReference type="InterPro" id="IPR004839">
    <property type="entry name" value="Aminotransferase_I/II_large"/>
</dbReference>
<dbReference type="InterPro" id="IPR005861">
    <property type="entry name" value="HisP_aminotrans"/>
</dbReference>
<dbReference type="InterPro" id="IPR015424">
    <property type="entry name" value="PyrdxlP-dep_Trfase"/>
</dbReference>
<dbReference type="InterPro" id="IPR015421">
    <property type="entry name" value="PyrdxlP-dep_Trfase_major"/>
</dbReference>
<dbReference type="InterPro" id="IPR015422">
    <property type="entry name" value="PyrdxlP-dep_Trfase_small"/>
</dbReference>
<dbReference type="NCBIfam" id="TIGR01141">
    <property type="entry name" value="hisC"/>
    <property type="match status" value="1"/>
</dbReference>
<dbReference type="NCBIfam" id="NF002877">
    <property type="entry name" value="PRK03317.1"/>
    <property type="match status" value="1"/>
</dbReference>
<dbReference type="PANTHER" id="PTHR42885:SF2">
    <property type="entry name" value="HISTIDINOL-PHOSPHATE AMINOTRANSFERASE"/>
    <property type="match status" value="1"/>
</dbReference>
<dbReference type="PANTHER" id="PTHR42885">
    <property type="entry name" value="HISTIDINOL-PHOSPHATE AMINOTRANSFERASE-RELATED"/>
    <property type="match status" value="1"/>
</dbReference>
<dbReference type="Pfam" id="PF00155">
    <property type="entry name" value="Aminotran_1_2"/>
    <property type="match status" value="1"/>
</dbReference>
<dbReference type="SUPFAM" id="SSF53383">
    <property type="entry name" value="PLP-dependent transferases"/>
    <property type="match status" value="1"/>
</dbReference>